<gene>
    <name evidence="1" type="primary">purA</name>
    <name type="ordered locus">TERTU_3551</name>
</gene>
<dbReference type="EC" id="6.3.4.4" evidence="1"/>
<dbReference type="EMBL" id="CP001614">
    <property type="protein sequence ID" value="ACR10817.1"/>
    <property type="molecule type" value="Genomic_DNA"/>
</dbReference>
<dbReference type="RefSeq" id="WP_015816929.1">
    <property type="nucleotide sequence ID" value="NC_012997.1"/>
</dbReference>
<dbReference type="SMR" id="C5BRH0"/>
<dbReference type="STRING" id="377629.TERTU_3551"/>
<dbReference type="KEGG" id="ttu:TERTU_3551"/>
<dbReference type="eggNOG" id="COG0104">
    <property type="taxonomic scope" value="Bacteria"/>
</dbReference>
<dbReference type="HOGENOM" id="CLU_029848_0_0_6"/>
<dbReference type="OrthoDB" id="9807553at2"/>
<dbReference type="UniPathway" id="UPA00075">
    <property type="reaction ID" value="UER00335"/>
</dbReference>
<dbReference type="Proteomes" id="UP000009080">
    <property type="component" value="Chromosome"/>
</dbReference>
<dbReference type="GO" id="GO:0005737">
    <property type="term" value="C:cytoplasm"/>
    <property type="evidence" value="ECO:0007669"/>
    <property type="project" value="UniProtKB-SubCell"/>
</dbReference>
<dbReference type="GO" id="GO:0004019">
    <property type="term" value="F:adenylosuccinate synthase activity"/>
    <property type="evidence" value="ECO:0007669"/>
    <property type="project" value="UniProtKB-UniRule"/>
</dbReference>
<dbReference type="GO" id="GO:0005525">
    <property type="term" value="F:GTP binding"/>
    <property type="evidence" value="ECO:0007669"/>
    <property type="project" value="UniProtKB-UniRule"/>
</dbReference>
<dbReference type="GO" id="GO:0000287">
    <property type="term" value="F:magnesium ion binding"/>
    <property type="evidence" value="ECO:0007669"/>
    <property type="project" value="UniProtKB-UniRule"/>
</dbReference>
<dbReference type="GO" id="GO:0044208">
    <property type="term" value="P:'de novo' AMP biosynthetic process"/>
    <property type="evidence" value="ECO:0007669"/>
    <property type="project" value="UniProtKB-UniRule"/>
</dbReference>
<dbReference type="GO" id="GO:0046040">
    <property type="term" value="P:IMP metabolic process"/>
    <property type="evidence" value="ECO:0007669"/>
    <property type="project" value="TreeGrafter"/>
</dbReference>
<dbReference type="CDD" id="cd03108">
    <property type="entry name" value="AdSS"/>
    <property type="match status" value="1"/>
</dbReference>
<dbReference type="FunFam" id="1.10.300.10:FF:000001">
    <property type="entry name" value="Adenylosuccinate synthetase"/>
    <property type="match status" value="1"/>
</dbReference>
<dbReference type="FunFam" id="3.90.170.10:FF:000001">
    <property type="entry name" value="Adenylosuccinate synthetase"/>
    <property type="match status" value="1"/>
</dbReference>
<dbReference type="Gene3D" id="3.40.440.10">
    <property type="entry name" value="Adenylosuccinate Synthetase, subunit A, domain 1"/>
    <property type="match status" value="1"/>
</dbReference>
<dbReference type="Gene3D" id="1.10.300.10">
    <property type="entry name" value="Adenylosuccinate Synthetase, subunit A, domain 2"/>
    <property type="match status" value="1"/>
</dbReference>
<dbReference type="Gene3D" id="3.90.170.10">
    <property type="entry name" value="Adenylosuccinate Synthetase, subunit A, domain 3"/>
    <property type="match status" value="1"/>
</dbReference>
<dbReference type="HAMAP" id="MF_00011">
    <property type="entry name" value="Adenylosucc_synth"/>
    <property type="match status" value="1"/>
</dbReference>
<dbReference type="InterPro" id="IPR018220">
    <property type="entry name" value="Adenylosuccin_syn_GTP-bd"/>
</dbReference>
<dbReference type="InterPro" id="IPR033128">
    <property type="entry name" value="Adenylosuccin_syn_Lys_AS"/>
</dbReference>
<dbReference type="InterPro" id="IPR042109">
    <property type="entry name" value="Adenylosuccinate_synth_dom1"/>
</dbReference>
<dbReference type="InterPro" id="IPR042110">
    <property type="entry name" value="Adenylosuccinate_synth_dom2"/>
</dbReference>
<dbReference type="InterPro" id="IPR042111">
    <property type="entry name" value="Adenylosuccinate_synth_dom3"/>
</dbReference>
<dbReference type="InterPro" id="IPR001114">
    <property type="entry name" value="Adenylosuccinate_synthetase"/>
</dbReference>
<dbReference type="InterPro" id="IPR027417">
    <property type="entry name" value="P-loop_NTPase"/>
</dbReference>
<dbReference type="NCBIfam" id="NF002223">
    <property type="entry name" value="PRK01117.1"/>
    <property type="match status" value="1"/>
</dbReference>
<dbReference type="NCBIfam" id="TIGR00184">
    <property type="entry name" value="purA"/>
    <property type="match status" value="1"/>
</dbReference>
<dbReference type="PANTHER" id="PTHR11846">
    <property type="entry name" value="ADENYLOSUCCINATE SYNTHETASE"/>
    <property type="match status" value="1"/>
</dbReference>
<dbReference type="PANTHER" id="PTHR11846:SF0">
    <property type="entry name" value="ADENYLOSUCCINATE SYNTHETASE"/>
    <property type="match status" value="1"/>
</dbReference>
<dbReference type="Pfam" id="PF00709">
    <property type="entry name" value="Adenylsucc_synt"/>
    <property type="match status" value="1"/>
</dbReference>
<dbReference type="SMART" id="SM00788">
    <property type="entry name" value="Adenylsucc_synt"/>
    <property type="match status" value="1"/>
</dbReference>
<dbReference type="SUPFAM" id="SSF52540">
    <property type="entry name" value="P-loop containing nucleoside triphosphate hydrolases"/>
    <property type="match status" value="1"/>
</dbReference>
<dbReference type="PROSITE" id="PS01266">
    <property type="entry name" value="ADENYLOSUCCIN_SYN_1"/>
    <property type="match status" value="1"/>
</dbReference>
<dbReference type="PROSITE" id="PS00513">
    <property type="entry name" value="ADENYLOSUCCIN_SYN_2"/>
    <property type="match status" value="1"/>
</dbReference>
<reference key="1">
    <citation type="journal article" date="2009" name="PLoS ONE">
        <title>The complete genome of Teredinibacter turnerae T7901: an intracellular endosymbiont of marine wood-boring bivalves (shipworms).</title>
        <authorList>
            <person name="Yang J.C."/>
            <person name="Madupu R."/>
            <person name="Durkin A.S."/>
            <person name="Ekborg N.A."/>
            <person name="Pedamallu C.S."/>
            <person name="Hostetler J.B."/>
            <person name="Radune D."/>
            <person name="Toms B.S."/>
            <person name="Henrissat B."/>
            <person name="Coutinho P.M."/>
            <person name="Schwarz S."/>
            <person name="Field L."/>
            <person name="Trindade-Silva A.E."/>
            <person name="Soares C.A.G."/>
            <person name="Elshahawi S."/>
            <person name="Hanora A."/>
            <person name="Schmidt E.W."/>
            <person name="Haygood M.G."/>
            <person name="Posfai J."/>
            <person name="Benner J."/>
            <person name="Madinger C."/>
            <person name="Nove J."/>
            <person name="Anton B."/>
            <person name="Chaudhary K."/>
            <person name="Foster J."/>
            <person name="Holman A."/>
            <person name="Kumar S."/>
            <person name="Lessard P.A."/>
            <person name="Luyten Y.A."/>
            <person name="Slatko B."/>
            <person name="Wood N."/>
            <person name="Wu B."/>
            <person name="Teplitski M."/>
            <person name="Mougous J.D."/>
            <person name="Ward N."/>
            <person name="Eisen J.A."/>
            <person name="Badger J.H."/>
            <person name="Distel D.L."/>
        </authorList>
    </citation>
    <scope>NUCLEOTIDE SEQUENCE [LARGE SCALE GENOMIC DNA]</scope>
    <source>
        <strain>ATCC 39867 / T7901</strain>
    </source>
</reference>
<organism>
    <name type="scientific">Teredinibacter turnerae (strain ATCC 39867 / T7901)</name>
    <dbReference type="NCBI Taxonomy" id="377629"/>
    <lineage>
        <taxon>Bacteria</taxon>
        <taxon>Pseudomonadati</taxon>
        <taxon>Pseudomonadota</taxon>
        <taxon>Gammaproteobacteria</taxon>
        <taxon>Cellvibrionales</taxon>
        <taxon>Cellvibrionaceae</taxon>
        <taxon>Teredinibacter</taxon>
    </lineage>
</organism>
<proteinExistence type="inferred from homology"/>
<name>PURA_TERTT</name>
<keyword id="KW-0963">Cytoplasm</keyword>
<keyword id="KW-0342">GTP-binding</keyword>
<keyword id="KW-0436">Ligase</keyword>
<keyword id="KW-0460">Magnesium</keyword>
<keyword id="KW-0479">Metal-binding</keyword>
<keyword id="KW-0547">Nucleotide-binding</keyword>
<keyword id="KW-0658">Purine biosynthesis</keyword>
<keyword id="KW-1185">Reference proteome</keyword>
<feature type="chain" id="PRO_1000201766" description="Adenylosuccinate synthetase">
    <location>
        <begin position="1"/>
        <end position="430"/>
    </location>
</feature>
<feature type="active site" description="Proton acceptor" evidence="1">
    <location>
        <position position="14"/>
    </location>
</feature>
<feature type="active site" description="Proton donor" evidence="1">
    <location>
        <position position="42"/>
    </location>
</feature>
<feature type="binding site" evidence="1">
    <location>
        <begin position="13"/>
        <end position="19"/>
    </location>
    <ligand>
        <name>GTP</name>
        <dbReference type="ChEBI" id="CHEBI:37565"/>
    </ligand>
</feature>
<feature type="binding site" description="in other chain" evidence="1">
    <location>
        <begin position="14"/>
        <end position="17"/>
    </location>
    <ligand>
        <name>IMP</name>
        <dbReference type="ChEBI" id="CHEBI:58053"/>
        <note>ligand shared between dimeric partners</note>
    </ligand>
</feature>
<feature type="binding site" evidence="1">
    <location>
        <position position="14"/>
    </location>
    <ligand>
        <name>Mg(2+)</name>
        <dbReference type="ChEBI" id="CHEBI:18420"/>
    </ligand>
</feature>
<feature type="binding site" description="in other chain" evidence="1">
    <location>
        <begin position="39"/>
        <end position="42"/>
    </location>
    <ligand>
        <name>IMP</name>
        <dbReference type="ChEBI" id="CHEBI:58053"/>
        <note>ligand shared between dimeric partners</note>
    </ligand>
</feature>
<feature type="binding site" evidence="1">
    <location>
        <begin position="41"/>
        <end position="43"/>
    </location>
    <ligand>
        <name>GTP</name>
        <dbReference type="ChEBI" id="CHEBI:37565"/>
    </ligand>
</feature>
<feature type="binding site" evidence="1">
    <location>
        <position position="41"/>
    </location>
    <ligand>
        <name>Mg(2+)</name>
        <dbReference type="ChEBI" id="CHEBI:18420"/>
    </ligand>
</feature>
<feature type="binding site" description="in other chain" evidence="1">
    <location>
        <position position="130"/>
    </location>
    <ligand>
        <name>IMP</name>
        <dbReference type="ChEBI" id="CHEBI:58053"/>
        <note>ligand shared between dimeric partners</note>
    </ligand>
</feature>
<feature type="binding site" evidence="1">
    <location>
        <position position="144"/>
    </location>
    <ligand>
        <name>IMP</name>
        <dbReference type="ChEBI" id="CHEBI:58053"/>
        <note>ligand shared between dimeric partners</note>
    </ligand>
</feature>
<feature type="binding site" description="in other chain" evidence="1">
    <location>
        <position position="225"/>
    </location>
    <ligand>
        <name>IMP</name>
        <dbReference type="ChEBI" id="CHEBI:58053"/>
        <note>ligand shared between dimeric partners</note>
    </ligand>
</feature>
<feature type="binding site" description="in other chain" evidence="1">
    <location>
        <position position="240"/>
    </location>
    <ligand>
        <name>IMP</name>
        <dbReference type="ChEBI" id="CHEBI:58053"/>
        <note>ligand shared between dimeric partners</note>
    </ligand>
</feature>
<feature type="binding site" evidence="1">
    <location>
        <begin position="300"/>
        <end position="306"/>
    </location>
    <ligand>
        <name>substrate</name>
    </ligand>
</feature>
<feature type="binding site" description="in other chain" evidence="1">
    <location>
        <position position="304"/>
    </location>
    <ligand>
        <name>IMP</name>
        <dbReference type="ChEBI" id="CHEBI:58053"/>
        <note>ligand shared between dimeric partners</note>
    </ligand>
</feature>
<feature type="binding site" evidence="1">
    <location>
        <position position="306"/>
    </location>
    <ligand>
        <name>GTP</name>
        <dbReference type="ChEBI" id="CHEBI:37565"/>
    </ligand>
</feature>
<feature type="binding site" evidence="1">
    <location>
        <begin position="332"/>
        <end position="334"/>
    </location>
    <ligand>
        <name>GTP</name>
        <dbReference type="ChEBI" id="CHEBI:37565"/>
    </ligand>
</feature>
<feature type="binding site" evidence="1">
    <location>
        <begin position="414"/>
        <end position="416"/>
    </location>
    <ligand>
        <name>GTP</name>
        <dbReference type="ChEBI" id="CHEBI:37565"/>
    </ligand>
</feature>
<sequence>MGKNVVVLGTQWGDEGKGKIVDLLTEQVTHVARFQGGHNAGHTLVIDGKKTVLHLIPSGILHSGVTCFIGNGVVLAPDALMKEIHELEAQEVPVRERLKLSPACPLILPYHVALDQARELKRGEAKIGTTGRGIGPAYEDKVSRRGLRLGDLLHEERFATKLKEVMEYHNFALTQYYGAEAVDYQAVLDEALLLAKELRPMIVDVSDELHLAREAGKNILFEGAQGSLLDIDHGTYPFVTSSNTTAGGTATGSGFGPLYLDYVLGITKAYTTRVGAGPFPTELDCEVGEHLGVKGHEFGATTGRKRRTGWFDAVAVKHAVRINSMSGMCLTKLDVLDGLKEVKICVGYKNSAGEDVGIPCDAEGWEDIQPVYESLPGWSESTVGAKSVDALPQAARDYIARLEALVGITVDIISTGPDRVETIILKSPFA</sequence>
<comment type="function">
    <text evidence="1">Plays an important role in the de novo pathway of purine nucleotide biosynthesis. Catalyzes the first committed step in the biosynthesis of AMP from IMP.</text>
</comment>
<comment type="catalytic activity">
    <reaction evidence="1">
        <text>IMP + L-aspartate + GTP = N(6)-(1,2-dicarboxyethyl)-AMP + GDP + phosphate + 2 H(+)</text>
        <dbReference type="Rhea" id="RHEA:15753"/>
        <dbReference type="ChEBI" id="CHEBI:15378"/>
        <dbReference type="ChEBI" id="CHEBI:29991"/>
        <dbReference type="ChEBI" id="CHEBI:37565"/>
        <dbReference type="ChEBI" id="CHEBI:43474"/>
        <dbReference type="ChEBI" id="CHEBI:57567"/>
        <dbReference type="ChEBI" id="CHEBI:58053"/>
        <dbReference type="ChEBI" id="CHEBI:58189"/>
        <dbReference type="EC" id="6.3.4.4"/>
    </reaction>
</comment>
<comment type="cofactor">
    <cofactor evidence="1">
        <name>Mg(2+)</name>
        <dbReference type="ChEBI" id="CHEBI:18420"/>
    </cofactor>
    <text evidence="1">Binds 1 Mg(2+) ion per subunit.</text>
</comment>
<comment type="pathway">
    <text evidence="1">Purine metabolism; AMP biosynthesis via de novo pathway; AMP from IMP: step 1/2.</text>
</comment>
<comment type="subunit">
    <text evidence="1">Homodimer.</text>
</comment>
<comment type="subcellular location">
    <subcellularLocation>
        <location evidence="1">Cytoplasm</location>
    </subcellularLocation>
</comment>
<comment type="similarity">
    <text evidence="1">Belongs to the adenylosuccinate synthetase family.</text>
</comment>
<accession>C5BRH0</accession>
<protein>
    <recommendedName>
        <fullName evidence="1">Adenylosuccinate synthetase</fullName>
        <shortName evidence="1">AMPSase</shortName>
        <shortName evidence="1">AdSS</shortName>
        <ecNumber evidence="1">6.3.4.4</ecNumber>
    </recommendedName>
    <alternativeName>
        <fullName evidence="1">IMP--aspartate ligase</fullName>
    </alternativeName>
</protein>
<evidence type="ECO:0000255" key="1">
    <source>
        <dbReference type="HAMAP-Rule" id="MF_00011"/>
    </source>
</evidence>